<name>WFDC2_PIG</name>
<comment type="function">
    <text evidence="1">Broad range protease inhibitor.</text>
</comment>
<comment type="subunit">
    <text evidence="1">Homotrimer; disulfide-linked.</text>
</comment>
<comment type="subcellular location">
    <subcellularLocation>
        <location evidence="1">Secreted</location>
    </subcellularLocation>
</comment>
<comment type="tissue specificity">
    <text>Detected in the distal parts of the epididymis.</text>
</comment>
<keyword id="KW-0062">Aspartic protease inhibitor</keyword>
<keyword id="KW-1015">Disulfide bond</keyword>
<keyword id="KW-0646">Protease inhibitor</keyword>
<keyword id="KW-1185">Reference proteome</keyword>
<keyword id="KW-0677">Repeat</keyword>
<keyword id="KW-0964">Secreted</keyword>
<keyword id="KW-0722">Serine protease inhibitor</keyword>
<keyword id="KW-0732">Signal</keyword>
<keyword id="KW-0789">Thiol protease inhibitor</keyword>
<protein>
    <recommendedName>
        <fullName>WAP four-disulfide core domain protein 2</fullName>
    </recommendedName>
    <alternativeName>
        <fullName>Epididymal secretory protein E4</fullName>
    </alternativeName>
</protein>
<proteinExistence type="evidence at transcript level"/>
<evidence type="ECO:0000250" key="1"/>
<evidence type="ECO:0000255" key="2"/>
<evidence type="ECO:0000255" key="3">
    <source>
        <dbReference type="PROSITE-ProRule" id="PRU00722"/>
    </source>
</evidence>
<accession>Q8MI69</accession>
<feature type="signal peptide" evidence="2">
    <location>
        <begin position="1"/>
        <end position="26"/>
    </location>
</feature>
<feature type="chain" id="PRO_0000041372" description="WAP four-disulfide core domain protein 2">
    <location>
        <begin position="27"/>
        <end position="123"/>
    </location>
</feature>
<feature type="domain" description="WAP 1" evidence="3">
    <location>
        <begin position="28"/>
        <end position="69"/>
    </location>
</feature>
<feature type="domain" description="WAP 2" evidence="3">
    <location>
        <begin position="72"/>
        <end position="122"/>
    </location>
</feature>
<feature type="disulfide bond" evidence="3">
    <location>
        <begin position="35"/>
        <end position="61"/>
    </location>
</feature>
<feature type="disulfide bond" evidence="3">
    <location>
        <begin position="44"/>
        <end position="65"/>
    </location>
</feature>
<feature type="disulfide bond" evidence="3">
    <location>
        <begin position="48"/>
        <end position="60"/>
    </location>
</feature>
<feature type="disulfide bond" evidence="3">
    <location>
        <begin position="54"/>
        <end position="69"/>
    </location>
</feature>
<feature type="disulfide bond" evidence="3">
    <location>
        <begin position="79"/>
        <end position="109"/>
    </location>
</feature>
<feature type="disulfide bond" evidence="3">
    <location>
        <begin position="92"/>
        <end position="113"/>
    </location>
</feature>
<feature type="disulfide bond" evidence="3">
    <location>
        <begin position="96"/>
        <end position="108"/>
    </location>
</feature>
<feature type="disulfide bond" evidence="3">
    <location>
        <begin position="102"/>
        <end position="118"/>
    </location>
</feature>
<organism>
    <name type="scientific">Sus scrofa</name>
    <name type="common">Pig</name>
    <dbReference type="NCBI Taxonomy" id="9823"/>
    <lineage>
        <taxon>Eukaryota</taxon>
        <taxon>Metazoa</taxon>
        <taxon>Chordata</taxon>
        <taxon>Craniata</taxon>
        <taxon>Vertebrata</taxon>
        <taxon>Euteleostomi</taxon>
        <taxon>Mammalia</taxon>
        <taxon>Eutheria</taxon>
        <taxon>Laurasiatheria</taxon>
        <taxon>Artiodactyla</taxon>
        <taxon>Suina</taxon>
        <taxon>Suidae</taxon>
        <taxon>Sus</taxon>
    </lineage>
</organism>
<sequence length="123" mass="12756">MPACRLGLLVASLLLGLLLGLPPVTGTGAEKSGVCPAVEVDMNCTQECLSDADCADNLKCCKAGCVTICQMPNEKEGSCPQVDIAFPQLGLCLDQCQVDSQCPGQLKCCRNGCGKVSCVTPVF</sequence>
<reference key="1">
    <citation type="journal article" date="2003" name="Reprod. Domest. Anim.">
        <title>Cloning and characterization of boar epididymal secretory proteins by homology to the human.</title>
        <authorList>
            <person name="Schaefer B."/>
            <person name="von Horsten H.H."/>
            <person name="Dacheux J.-L."/>
            <person name="Holtz W."/>
            <person name="Kirchhoff C."/>
        </authorList>
    </citation>
    <scope>NUCLEOTIDE SEQUENCE [MRNA]</scope>
    <source>
        <tissue>Epididymis</tissue>
    </source>
</reference>
<dbReference type="EMBL" id="AJ506744">
    <property type="protein sequence ID" value="CAD44844.1"/>
    <property type="molecule type" value="mRNA"/>
</dbReference>
<dbReference type="RefSeq" id="NP_999112.1">
    <property type="nucleotide sequence ID" value="NM_213947.1"/>
</dbReference>
<dbReference type="RefSeq" id="XP_013840883.1">
    <property type="nucleotide sequence ID" value="XM_013985429.1"/>
</dbReference>
<dbReference type="SMR" id="Q8MI69"/>
<dbReference type="FunCoup" id="Q8MI69">
    <property type="interactions" value="300"/>
</dbReference>
<dbReference type="STRING" id="9823.ENSSSCP00000034464"/>
<dbReference type="MEROPS" id="I17.004"/>
<dbReference type="PaxDb" id="9823-ENSSSCP00000007889"/>
<dbReference type="Ensembl" id="ENSSSCT00000039535.3">
    <property type="protein sequence ID" value="ENSSSCP00000034464.1"/>
    <property type="gene ID" value="ENSSSCG00000033003.3"/>
</dbReference>
<dbReference type="Ensembl" id="ENSSSCT00115015120">
    <property type="protein sequence ID" value="ENSSSCP00115014274"/>
    <property type="gene ID" value="ENSSSCG00115008672"/>
</dbReference>
<dbReference type="GeneID" id="396987"/>
<dbReference type="KEGG" id="ssc:396987"/>
<dbReference type="CTD" id="10406"/>
<dbReference type="VGNC" id="VGNC:95719">
    <property type="gene designation" value="WFDC2"/>
</dbReference>
<dbReference type="eggNOG" id="ENOG502SA8J">
    <property type="taxonomic scope" value="Eukaryota"/>
</dbReference>
<dbReference type="GeneTree" id="ENSGT00730000111410"/>
<dbReference type="HOGENOM" id="CLU_187014_0_0_1"/>
<dbReference type="InParanoid" id="Q8MI69"/>
<dbReference type="OMA" id="FCGRSCY"/>
<dbReference type="OrthoDB" id="6060011at2759"/>
<dbReference type="Proteomes" id="UP000008227">
    <property type="component" value="Chromosome 17"/>
</dbReference>
<dbReference type="Proteomes" id="UP000314985">
    <property type="component" value="Unplaced"/>
</dbReference>
<dbReference type="Proteomes" id="UP000694570">
    <property type="component" value="Unplaced"/>
</dbReference>
<dbReference type="Proteomes" id="UP000694571">
    <property type="component" value="Unplaced"/>
</dbReference>
<dbReference type="Proteomes" id="UP000694720">
    <property type="component" value="Unplaced"/>
</dbReference>
<dbReference type="Proteomes" id="UP000694722">
    <property type="component" value="Unplaced"/>
</dbReference>
<dbReference type="Proteomes" id="UP000694723">
    <property type="component" value="Unplaced"/>
</dbReference>
<dbReference type="Proteomes" id="UP000694724">
    <property type="component" value="Unplaced"/>
</dbReference>
<dbReference type="Proteomes" id="UP000694725">
    <property type="component" value="Unplaced"/>
</dbReference>
<dbReference type="Proteomes" id="UP000694726">
    <property type="component" value="Unplaced"/>
</dbReference>
<dbReference type="Proteomes" id="UP000694727">
    <property type="component" value="Unplaced"/>
</dbReference>
<dbReference type="Proteomes" id="UP000694728">
    <property type="component" value="Unplaced"/>
</dbReference>
<dbReference type="Bgee" id="ENSSSCG00000033003">
    <property type="expression patterns" value="Expressed in penis and 36 other cell types or tissues"/>
</dbReference>
<dbReference type="GO" id="GO:0005615">
    <property type="term" value="C:extracellular space"/>
    <property type="evidence" value="ECO:0000318"/>
    <property type="project" value="GO_Central"/>
</dbReference>
<dbReference type="GO" id="GO:0019828">
    <property type="term" value="F:aspartic-type endopeptidase inhibitor activity"/>
    <property type="evidence" value="ECO:0007669"/>
    <property type="project" value="UniProtKB-KW"/>
</dbReference>
<dbReference type="GO" id="GO:0004869">
    <property type="term" value="F:cysteine-type endopeptidase inhibitor activity"/>
    <property type="evidence" value="ECO:0007669"/>
    <property type="project" value="UniProtKB-KW"/>
</dbReference>
<dbReference type="GO" id="GO:0004867">
    <property type="term" value="F:serine-type endopeptidase inhibitor activity"/>
    <property type="evidence" value="ECO:0000318"/>
    <property type="project" value="GO_Central"/>
</dbReference>
<dbReference type="GO" id="GO:0019731">
    <property type="term" value="P:antibacterial humoral response"/>
    <property type="evidence" value="ECO:0000318"/>
    <property type="project" value="GO_Central"/>
</dbReference>
<dbReference type="GO" id="GO:0045087">
    <property type="term" value="P:innate immune response"/>
    <property type="evidence" value="ECO:0000318"/>
    <property type="project" value="GO_Central"/>
</dbReference>
<dbReference type="CDD" id="cd00199">
    <property type="entry name" value="WAP"/>
    <property type="match status" value="1"/>
</dbReference>
<dbReference type="FunFam" id="4.10.75.10:FF:000001">
    <property type="entry name" value="Anosmin 1"/>
    <property type="match status" value="1"/>
</dbReference>
<dbReference type="Gene3D" id="4.10.75.10">
    <property type="entry name" value="Elafin-like"/>
    <property type="match status" value="2"/>
</dbReference>
<dbReference type="InterPro" id="IPR036645">
    <property type="entry name" value="Elafin-like_sf"/>
</dbReference>
<dbReference type="InterPro" id="IPR008197">
    <property type="entry name" value="WAP_dom"/>
</dbReference>
<dbReference type="InterPro" id="IPR050514">
    <property type="entry name" value="WAP_four-disulfide_core"/>
</dbReference>
<dbReference type="PANTHER" id="PTHR19441:SF34">
    <property type="entry name" value="WAP FOUR-DISULFIDE CORE DOMAIN PROTEIN 2"/>
    <property type="match status" value="1"/>
</dbReference>
<dbReference type="PANTHER" id="PTHR19441">
    <property type="entry name" value="WHEY ACDIC PROTEIN WAP"/>
    <property type="match status" value="1"/>
</dbReference>
<dbReference type="Pfam" id="PF00095">
    <property type="entry name" value="WAP"/>
    <property type="match status" value="2"/>
</dbReference>
<dbReference type="PRINTS" id="PR00003">
    <property type="entry name" value="4DISULPHCORE"/>
</dbReference>
<dbReference type="SMART" id="SM00217">
    <property type="entry name" value="WAP"/>
    <property type="match status" value="2"/>
</dbReference>
<dbReference type="SUPFAM" id="SSF57256">
    <property type="entry name" value="Elafin-like"/>
    <property type="match status" value="2"/>
</dbReference>
<dbReference type="PROSITE" id="PS51390">
    <property type="entry name" value="WAP"/>
    <property type="match status" value="2"/>
</dbReference>
<gene>
    <name type="primary">WFDC2</name>
</gene>